<comment type="function">
    <text evidence="4">Nuclear transcriptional activator of viral gene expression, that is essential for viral transcription from the LTR promoter and replication. Acts as a sequence-specific molecular adapter, directing components of the cellular transcription machinery to the viral RNA to enhance transcription by the RNA polymerase II (RNA pol II) complex, thereby increasing the level of full-length transcripts. Tat associates with the CCNT1/cyclin-T1 component of the P-TEFb complex (CDK9 and CCNT1), which promotes RNA chain elongation. This binding increases Tat's affinity for a branched hairpin structure at the 5'-end of all nascent viral mRNAs referred to as the transactivation responsive RNA element (TAR RNA). The CDK9 component of P-TEFb hyperphosphorylates the C-terminus of RNA Pol II that becomes stabilized and much more processive (Probable).</text>
</comment>
<comment type="subunit">
    <text evidence="3">Binds to equine CCNT1. Participates in the formation of a complex composed at least of Tat, P-TEFb, TAR RNA, RNA Pol II (Probable).</text>
</comment>
<comment type="subcellular location">
    <subcellularLocation>
        <location evidence="1">Host nucleus</location>
        <location evidence="1">Host nucleolus</location>
    </subcellularLocation>
</comment>
<comment type="similarity">
    <text evidence="3">Belongs to the lentiviruses Tat family.</text>
</comment>
<comment type="sequence caution" evidence="3">
    <conflict type="erroneous gene model prediction">
        <sequence resource="EMBL-CDS" id="AAA43025"/>
    </conflict>
</comment>
<accession>P20920</accession>
<organism>
    <name type="scientific">Equine infectious anemia virus (strain Wyoming)</name>
    <name type="common">EIAV</name>
    <dbReference type="NCBI Taxonomy" id="11672"/>
    <lineage>
        <taxon>Viruses</taxon>
        <taxon>Riboviria</taxon>
        <taxon>Pararnavirae</taxon>
        <taxon>Artverviricota</taxon>
        <taxon>Revtraviricetes</taxon>
        <taxon>Ortervirales</taxon>
        <taxon>Retroviridae</taxon>
        <taxon>Orthoretrovirinae</taxon>
        <taxon>Lentivirus</taxon>
        <taxon>Equine infectious anemia virus</taxon>
    </lineage>
</organism>
<dbReference type="EMBL" id="M36592">
    <property type="protein sequence ID" value="AAB02403.2"/>
    <property type="molecule type" value="Genomic_RNA"/>
</dbReference>
<dbReference type="EMBL" id="M54797">
    <property type="protein sequence ID" value="AAA43025.1"/>
    <property type="status" value="ALT_SEQ"/>
    <property type="molecule type" value="Genomic_RNA"/>
</dbReference>
<dbReference type="PDB" id="2W2H">
    <property type="method" value="X-ray"/>
    <property type="resolution" value="3.25 A"/>
    <property type="chains" value="C/D=47-75"/>
</dbReference>
<dbReference type="PDBsum" id="2W2H"/>
<dbReference type="SMR" id="P20920"/>
<dbReference type="EvolutionaryTrace" id="P20920"/>
<dbReference type="GO" id="GO:0044196">
    <property type="term" value="C:host cell nucleolus"/>
    <property type="evidence" value="ECO:0007669"/>
    <property type="project" value="UniProtKB-SubCell"/>
</dbReference>
<dbReference type="GO" id="GO:0003723">
    <property type="term" value="F:RNA binding"/>
    <property type="evidence" value="ECO:0007669"/>
    <property type="project" value="UniProtKB-KW"/>
</dbReference>
<dbReference type="GO" id="GO:0001070">
    <property type="term" value="F:RNA-binding transcription regulator activity"/>
    <property type="evidence" value="ECO:0007669"/>
    <property type="project" value="InterPro"/>
</dbReference>
<dbReference type="GO" id="GO:0050434">
    <property type="term" value="P:positive regulation of viral transcription"/>
    <property type="evidence" value="ECO:0007669"/>
    <property type="project" value="InterPro"/>
</dbReference>
<dbReference type="Gene3D" id="4.10.210.10">
    <property type="entry name" value="Transactivator Protein (TAT, TAT EIAVY)"/>
    <property type="match status" value="1"/>
</dbReference>
<dbReference type="InterPro" id="IPR001831">
    <property type="entry name" value="IV_Tat"/>
</dbReference>
<dbReference type="Pfam" id="PF00539">
    <property type="entry name" value="Tat"/>
    <property type="match status" value="1"/>
</dbReference>
<protein>
    <recommendedName>
        <fullName>Protein Tat</fullName>
    </recommendedName>
    <alternativeName>
        <fullName>E-Tat</fullName>
    </alternativeName>
    <alternativeName>
        <fullName>Transactivating regulatory protein</fullName>
    </alternativeName>
    <alternativeName>
        <fullName>eTat</fullName>
    </alternativeName>
</protein>
<sequence>MADRRIPGTAEENLQKSSGGVPGQNTGGQEARPNYHCQLCFLRSLGIDYLDASLRKKNKQRLKAIQQGRQPQYLL</sequence>
<proteinExistence type="evidence at protein level"/>
<name>TAT_EIAVY</name>
<evidence type="ECO:0000250" key="1"/>
<evidence type="ECO:0000256" key="2">
    <source>
        <dbReference type="SAM" id="MobiDB-lite"/>
    </source>
</evidence>
<evidence type="ECO:0000305" key="3"/>
<evidence type="ECO:0000305" key="4">
    <source>
    </source>
</evidence>
<evidence type="ECO:0007829" key="5">
    <source>
        <dbReference type="PDB" id="2W2H"/>
    </source>
</evidence>
<keyword id="KW-0002">3D-structure</keyword>
<keyword id="KW-0010">Activator</keyword>
<keyword id="KW-1048">Host nucleus</keyword>
<keyword id="KW-0945">Host-virus interaction</keyword>
<keyword id="KW-0694">RNA-binding</keyword>
<keyword id="KW-0804">Transcription</keyword>
<keyword id="KW-0805">Transcription regulation</keyword>
<feature type="chain" id="PRO_0000085488" description="Protein Tat">
    <location>
        <begin position="1"/>
        <end position="75"/>
    </location>
</feature>
<feature type="region of interest" description="Disordered" evidence="2">
    <location>
        <begin position="1"/>
        <end position="30"/>
    </location>
</feature>
<feature type="region of interest" description="Core" evidence="1">
    <location>
        <begin position="35"/>
        <end position="49"/>
    </location>
</feature>
<feature type="region of interest" description="RNA-binding (TAR)">
    <location>
        <begin position="55"/>
        <end position="75"/>
    </location>
</feature>
<feature type="short sequence motif" description="Nuclear localization signal">
    <location>
        <begin position="55"/>
        <end position="63"/>
    </location>
</feature>
<feature type="turn" evidence="5">
    <location>
        <begin position="52"/>
        <end position="57"/>
    </location>
</feature>
<feature type="helix" evidence="5">
    <location>
        <begin position="58"/>
        <end position="62"/>
    </location>
</feature>
<feature type="turn" evidence="5">
    <location>
        <begin position="66"/>
        <end position="68"/>
    </location>
</feature>
<reference key="1">
    <citation type="journal article" date="1990" name="Virology">
        <title>Identification of sequences encoding the equine infectious anemia virus tat gene.</title>
        <authorList>
            <person name="Noiman S."/>
            <person name="Gazit A."/>
            <person name="Tori O."/>
            <person name="Sherman L."/>
            <person name="Miki T."/>
            <person name="Tronick S.R."/>
            <person name="Yaniv A."/>
        </authorList>
    </citation>
    <scope>NUCLEOTIDE SEQUENCE [GENOMIC RNA]</scope>
</reference>
<reference key="2">
    <citation type="journal article" date="1990" name="J. Virol.">
        <title>Cloning and characterization of cDNAs encoding equine infectious anemia virus tat and putative Rev proteins.</title>
        <authorList>
            <person name="Stephens R.M."/>
            <person name="Derse D."/>
            <person name="Rice N.R."/>
        </authorList>
    </citation>
    <scope>NUCLEOTIDE SEQUENCE [GENOMIC RNA] OF 1-9</scope>
</reference>
<reference key="3">
    <citation type="journal article" date="1991" name="J. Virol.">
        <title>A minimal lentivirus Tat.</title>
        <authorList>
            <person name="Derse D."/>
            <person name="Carvalho M."/>
            <person name="Carroll R."/>
            <person name="Peterlin B.M."/>
        </authorList>
    </citation>
    <scope>CHARACTERIZATION</scope>
</reference>
<reference key="4">
    <citation type="journal article" date="1999" name="Mol. Cell. Biol.">
        <title>Highly divergent lentiviral Tat proteins activate viral gene expression by a common mechanism.</title>
        <authorList>
            <person name="Bieniasz P.D."/>
            <person name="Grdina T.A."/>
            <person name="Bogerd H.P."/>
            <person name="Cullen B.R."/>
        </authorList>
    </citation>
    <scope>INTERACTION WITH EQUINE CCNT1</scope>
    <scope>FUNCTION</scope>
</reference>
<gene>
    <name type="primary">tat</name>
</gene>
<organismHost>
    <name type="scientific">Equus asinus</name>
    <name type="common">Donkey</name>
    <name type="synonym">Equus africanus asinus</name>
    <dbReference type="NCBI Taxonomy" id="9793"/>
</organismHost>
<organismHost>
    <name type="scientific">Equus caballus</name>
    <name type="common">Horse</name>
    <dbReference type="NCBI Taxonomy" id="9796"/>
</organismHost>